<organismHost>
    <name type="scientific">Aves</name>
    <dbReference type="NCBI Taxonomy" id="8782"/>
</organismHost>
<organismHost>
    <name type="scientific">Homo sapiens</name>
    <name type="common">Human</name>
    <dbReference type="NCBI Taxonomy" id="9606"/>
</organismHost>
<organismHost>
    <name type="scientific">Sus scrofa</name>
    <name type="common">Pig</name>
    <dbReference type="NCBI Taxonomy" id="9823"/>
</organismHost>
<name>NCAP_I54A0</name>
<organism>
    <name type="scientific">Influenza A virus (strain A/Leningrad/1/1954 H1N1)</name>
    <dbReference type="NCBI Taxonomy" id="393557"/>
    <lineage>
        <taxon>Viruses</taxon>
        <taxon>Riboviria</taxon>
        <taxon>Orthornavirae</taxon>
        <taxon>Negarnaviricota</taxon>
        <taxon>Polyploviricotina</taxon>
        <taxon>Insthoviricetes</taxon>
        <taxon>Articulavirales</taxon>
        <taxon>Orthomyxoviridae</taxon>
        <taxon>Alphainfluenzavirus</taxon>
        <taxon>Alphainfluenzavirus influenzae</taxon>
        <taxon>Influenza A virus</taxon>
    </lineage>
</organism>
<evidence type="ECO:0000255" key="1">
    <source>
        <dbReference type="HAMAP-Rule" id="MF_04070"/>
    </source>
</evidence>
<evidence type="ECO:0000256" key="2">
    <source>
        <dbReference type="SAM" id="MobiDB-lite"/>
    </source>
</evidence>
<gene>
    <name evidence="1" type="primary">NP</name>
</gene>
<comment type="function">
    <text evidence="1">Encapsidates the negative strand viral RNA, protecting it from nucleases. The encapsidated genomic RNA is termed the ribonucleoprotein (RNP) and serves as template for transcription and replication. The RNP needs to be localized in the host nucleus to start an infectious cycle, but is too large to diffuse through the nuclear pore complex. NP comprises at least 2 nuclear localization signals that are responsible for the active RNP import into the nucleus through cellular importin alpha/beta pathway. Later in the infection, nclear export of RNPs are mediated through viral proteins NEP interacting with M1 which binds nucleoproteins. It is possible that nucleoprotein binds directly host exportin-1/XPO1 and plays an active role in RNPs nuclear export. M1 interaction with RNP seems to hide nucleoprotein's nuclear localization signals. Soon after a virion infects a new cell, M1 dissociates from the RNP under acidification of the virion driven by M2 protein. Dissociation of M1 from RNP unmasks nucleoprotein's nuclear localization signals, targeting the RNP to the nucleus.</text>
</comment>
<comment type="subunit">
    <text evidence="1">Homomultimerizes to form the nucleocapsid. May bind host exportin-1/XPO1. Binds to viral genomic RNA. Protein-RNA contacts are mediated by a combination of electrostatic interactions between positively charged residues and the phosphate backbone and planar interactions between aromatic side chains and bases.</text>
</comment>
<comment type="subcellular location">
    <subcellularLocation>
        <location evidence="1">Virion</location>
    </subcellularLocation>
    <subcellularLocation>
        <location evidence="1">Host nucleus</location>
    </subcellularLocation>
</comment>
<comment type="PTM">
    <text evidence="1">Late in virus-infected cells, may be cleaved from a 56-kDa protein to a 53-kDa protein by a cellular caspase. This cleavage might be a marker for the onset of apoptosis in infected cells or have a specific function in virus host interaction.</text>
</comment>
<comment type="similarity">
    <text evidence="1">Belongs to the influenza viruses nucleoprotein family.</text>
</comment>
<feature type="chain" id="PRO_0000079071" description="Nucleoprotein">
    <location>
        <begin position="1"/>
        <end position="498"/>
    </location>
</feature>
<feature type="region of interest" description="Disordered" evidence="2">
    <location>
        <begin position="1"/>
        <end position="21"/>
    </location>
</feature>
<feature type="short sequence motif" description="Unconventional nuclear localization signal" evidence="1">
    <location>
        <begin position="1"/>
        <end position="18"/>
    </location>
</feature>
<feature type="short sequence motif" description="Bipartite nuclear localization signal" evidence="1">
    <location>
        <begin position="198"/>
        <end position="216"/>
    </location>
</feature>
<feature type="compositionally biased region" description="Basic and acidic residues" evidence="2">
    <location>
        <begin position="8"/>
        <end position="21"/>
    </location>
</feature>
<dbReference type="EMBL" id="M38279">
    <property type="protein sequence ID" value="AAA43459.1"/>
    <property type="molecule type" value="Genomic_RNA"/>
</dbReference>
<dbReference type="SMR" id="P31609"/>
<dbReference type="GO" id="GO:0019029">
    <property type="term" value="C:helical viral capsid"/>
    <property type="evidence" value="ECO:0007669"/>
    <property type="project" value="UniProtKB-UniRule"/>
</dbReference>
<dbReference type="GO" id="GO:0043657">
    <property type="term" value="C:host cell"/>
    <property type="evidence" value="ECO:0007669"/>
    <property type="project" value="GOC"/>
</dbReference>
<dbReference type="GO" id="GO:0042025">
    <property type="term" value="C:host cell nucleus"/>
    <property type="evidence" value="ECO:0007669"/>
    <property type="project" value="UniProtKB-SubCell"/>
</dbReference>
<dbReference type="GO" id="GO:1990904">
    <property type="term" value="C:ribonucleoprotein complex"/>
    <property type="evidence" value="ECO:0007669"/>
    <property type="project" value="UniProtKB-KW"/>
</dbReference>
<dbReference type="GO" id="GO:0019013">
    <property type="term" value="C:viral nucleocapsid"/>
    <property type="evidence" value="ECO:0007669"/>
    <property type="project" value="UniProtKB-UniRule"/>
</dbReference>
<dbReference type="GO" id="GO:0003723">
    <property type="term" value="F:RNA binding"/>
    <property type="evidence" value="ECO:0007669"/>
    <property type="project" value="UniProtKB-UniRule"/>
</dbReference>
<dbReference type="GO" id="GO:0005198">
    <property type="term" value="F:structural molecule activity"/>
    <property type="evidence" value="ECO:0007669"/>
    <property type="project" value="UniProtKB-UniRule"/>
</dbReference>
<dbReference type="GO" id="GO:0046718">
    <property type="term" value="P:symbiont entry into host cell"/>
    <property type="evidence" value="ECO:0007669"/>
    <property type="project" value="UniProtKB-KW"/>
</dbReference>
<dbReference type="GO" id="GO:0075732">
    <property type="term" value="P:viral penetration into host nucleus"/>
    <property type="evidence" value="ECO:0007669"/>
    <property type="project" value="UniProtKB-UniRule"/>
</dbReference>
<dbReference type="HAMAP" id="MF_04070">
    <property type="entry name" value="INFV_NCAP"/>
    <property type="match status" value="1"/>
</dbReference>
<dbReference type="InterPro" id="IPR002141">
    <property type="entry name" value="Flu_NP"/>
</dbReference>
<dbReference type="Pfam" id="PF00506">
    <property type="entry name" value="Flu_NP"/>
    <property type="match status" value="1"/>
</dbReference>
<dbReference type="SUPFAM" id="SSF161003">
    <property type="entry name" value="flu NP-like"/>
    <property type="match status" value="1"/>
</dbReference>
<proteinExistence type="inferred from homology"/>
<accession>P31609</accession>
<reference key="1">
    <citation type="journal article" date="1985" name="Bioorg. Khim.">
        <title>Synthesis, cloning and determination of the primary structure of a full-size DNA copy of the NP protein gene from influenza virus type A.</title>
        <authorList>
            <person name="Beklemishev A.B."/>
            <person name="Blinov V.M."/>
            <person name="Vassilenko S.K."/>
            <person name="Golovin S.Y."/>
            <person name="Karginov V.A."/>
            <person name="Mamayev L.V."/>
            <person name="Mikriukov N.N."/>
            <person name="Netesov S.V."/>
            <person name="Petrenko V.A."/>
            <person name="Petrov N.A."/>
            <person name="Frolov I.V."/>
        </authorList>
    </citation>
    <scope>NUCLEOTIDE SEQUENCE [GENOMIC RNA]</scope>
</reference>
<sequence length="498" mass="56169">MASQGTKRSYEQMETDGERQNATEIRASVGKMIGGIGRFYIQMCTELKLSDYEGRLIQNSLTIERMVLSAFDERRNKYLEEHPSAGKDPKKTGGPIYRRVNGKWMRELILYDKEEIRRIWRQANNGDDATAGLTHMMIWHSNLNDATYQRTRALVRTGMDPRMCSLMQGSTLPRRSGAAGAAVKGVGTMVMELVRMIKRGINDRNFWRGENGRKTRIAYERMCNILKGKFQTAAQKAMMDQVRESRNPGNAEFEDLTFLARSALILRGSVAHKSCLPACVYGPAVASGYDFEREGYSLVGIDPFRLLQNSQVYSLIRPNENPAHKSQLVWMACHSAAFEDLRVLSFIKGTKVLPRGKLSTRGVQIASNENMETMESSTLELRSRYWAIRTRSGGNTNQQRASAGQISIQPTFSVQRNLPFDRTTVMAAFSGNTEGRTSDMRTEIIRMMESARPEDVSFQGRGVFELSDEKAASPIVPSFDMSNEGSYFFGDNAEEYDN</sequence>
<keyword id="KW-0167">Capsid protein</keyword>
<keyword id="KW-1139">Helical capsid protein</keyword>
<keyword id="KW-1048">Host nucleus</keyword>
<keyword id="KW-0945">Host-virus interaction</keyword>
<keyword id="KW-0687">Ribonucleoprotein</keyword>
<keyword id="KW-0694">RNA-binding</keyword>
<keyword id="KW-0543">Viral nucleoprotein</keyword>
<keyword id="KW-1163">Viral penetration into host nucleus</keyword>
<keyword id="KW-0946">Virion</keyword>
<keyword id="KW-1160">Virus entry into host cell</keyword>
<protein>
    <recommendedName>
        <fullName evidence="1">Nucleoprotein</fullName>
    </recommendedName>
    <alternativeName>
        <fullName evidence="1">Nucleocapsid protein</fullName>
        <shortName evidence="1">Protein N</shortName>
    </alternativeName>
</protein>